<protein>
    <recommendedName>
        <fullName evidence="1">Imidazoleglycerol-phosphate dehydratase</fullName>
        <shortName evidence="1">IGPD</shortName>
        <ecNumber evidence="1">4.2.1.19</ecNumber>
    </recommendedName>
</protein>
<organism>
    <name type="scientific">Anaeromyxobacter sp. (strain Fw109-5)</name>
    <dbReference type="NCBI Taxonomy" id="404589"/>
    <lineage>
        <taxon>Bacteria</taxon>
        <taxon>Pseudomonadati</taxon>
        <taxon>Myxococcota</taxon>
        <taxon>Myxococcia</taxon>
        <taxon>Myxococcales</taxon>
        <taxon>Cystobacterineae</taxon>
        <taxon>Anaeromyxobacteraceae</taxon>
        <taxon>Anaeromyxobacter</taxon>
    </lineage>
</organism>
<accession>A7H8C1</accession>
<evidence type="ECO:0000255" key="1">
    <source>
        <dbReference type="HAMAP-Rule" id="MF_00076"/>
    </source>
</evidence>
<evidence type="ECO:0000256" key="2">
    <source>
        <dbReference type="SAM" id="MobiDB-lite"/>
    </source>
</evidence>
<name>HIS7_ANADF</name>
<proteinExistence type="inferred from homology"/>
<reference key="1">
    <citation type="journal article" date="2015" name="Genome Announc.">
        <title>Complete genome sequence of Anaeromyxobacter sp. Fw109-5, an anaerobic, metal-reducing bacterium isolated from a contaminated subsurface environment.</title>
        <authorList>
            <person name="Hwang C."/>
            <person name="Copeland A."/>
            <person name="Lucas S."/>
            <person name="Lapidus A."/>
            <person name="Barry K."/>
            <person name="Glavina Del Rio T."/>
            <person name="Dalin E."/>
            <person name="Tice H."/>
            <person name="Pitluck S."/>
            <person name="Sims D."/>
            <person name="Brettin T."/>
            <person name="Bruce D.C."/>
            <person name="Detter J.C."/>
            <person name="Han C.S."/>
            <person name="Schmutz J."/>
            <person name="Larimer F.W."/>
            <person name="Land M.L."/>
            <person name="Hauser L.J."/>
            <person name="Kyrpides N."/>
            <person name="Lykidis A."/>
            <person name="Richardson P."/>
            <person name="Belieav A."/>
            <person name="Sanford R.A."/>
            <person name="Loeffler F.E."/>
            <person name="Fields M.W."/>
        </authorList>
    </citation>
    <scope>NUCLEOTIDE SEQUENCE [LARGE SCALE GENOMIC DNA]</scope>
    <source>
        <strain>Fw109-5</strain>
    </source>
</reference>
<dbReference type="EC" id="4.2.1.19" evidence="1"/>
<dbReference type="EMBL" id="CP000769">
    <property type="protein sequence ID" value="ABS24967.1"/>
    <property type="molecule type" value="Genomic_DNA"/>
</dbReference>
<dbReference type="RefSeq" id="WP_011985073.1">
    <property type="nucleotide sequence ID" value="NC_009675.1"/>
</dbReference>
<dbReference type="SMR" id="A7H8C1"/>
<dbReference type="STRING" id="404589.Anae109_0754"/>
<dbReference type="KEGG" id="afw:Anae109_0754"/>
<dbReference type="eggNOG" id="COG0131">
    <property type="taxonomic scope" value="Bacteria"/>
</dbReference>
<dbReference type="HOGENOM" id="CLU_044308_3_0_7"/>
<dbReference type="OrthoDB" id="9790411at2"/>
<dbReference type="UniPathway" id="UPA00031">
    <property type="reaction ID" value="UER00011"/>
</dbReference>
<dbReference type="Proteomes" id="UP000006382">
    <property type="component" value="Chromosome"/>
</dbReference>
<dbReference type="GO" id="GO:0005737">
    <property type="term" value="C:cytoplasm"/>
    <property type="evidence" value="ECO:0007669"/>
    <property type="project" value="UniProtKB-SubCell"/>
</dbReference>
<dbReference type="GO" id="GO:0004424">
    <property type="term" value="F:imidazoleglycerol-phosphate dehydratase activity"/>
    <property type="evidence" value="ECO:0007669"/>
    <property type="project" value="UniProtKB-UniRule"/>
</dbReference>
<dbReference type="GO" id="GO:0000105">
    <property type="term" value="P:L-histidine biosynthetic process"/>
    <property type="evidence" value="ECO:0007669"/>
    <property type="project" value="UniProtKB-UniRule"/>
</dbReference>
<dbReference type="CDD" id="cd07914">
    <property type="entry name" value="IGPD"/>
    <property type="match status" value="1"/>
</dbReference>
<dbReference type="FunFam" id="3.30.230.40:FF:000001">
    <property type="entry name" value="Imidazoleglycerol-phosphate dehydratase HisB"/>
    <property type="match status" value="1"/>
</dbReference>
<dbReference type="FunFam" id="3.30.230.40:FF:000003">
    <property type="entry name" value="Imidazoleglycerol-phosphate dehydratase HisB"/>
    <property type="match status" value="1"/>
</dbReference>
<dbReference type="Gene3D" id="3.30.230.40">
    <property type="entry name" value="Imidazole glycerol phosphate dehydratase, domain 1"/>
    <property type="match status" value="2"/>
</dbReference>
<dbReference type="HAMAP" id="MF_00076">
    <property type="entry name" value="HisB"/>
    <property type="match status" value="1"/>
</dbReference>
<dbReference type="InterPro" id="IPR038494">
    <property type="entry name" value="IGPD_sf"/>
</dbReference>
<dbReference type="InterPro" id="IPR000807">
    <property type="entry name" value="ImidazoleglycerolP_deHydtase"/>
</dbReference>
<dbReference type="InterPro" id="IPR020565">
    <property type="entry name" value="ImidazoleglycerP_deHydtase_CS"/>
</dbReference>
<dbReference type="InterPro" id="IPR020568">
    <property type="entry name" value="Ribosomal_Su5_D2-typ_SF"/>
</dbReference>
<dbReference type="NCBIfam" id="NF002111">
    <property type="entry name" value="PRK00951.2-1"/>
    <property type="match status" value="1"/>
</dbReference>
<dbReference type="NCBIfam" id="NF002114">
    <property type="entry name" value="PRK00951.2-4"/>
    <property type="match status" value="1"/>
</dbReference>
<dbReference type="PANTHER" id="PTHR23133:SF2">
    <property type="entry name" value="IMIDAZOLEGLYCEROL-PHOSPHATE DEHYDRATASE"/>
    <property type="match status" value="1"/>
</dbReference>
<dbReference type="PANTHER" id="PTHR23133">
    <property type="entry name" value="IMIDAZOLEGLYCEROL-PHOSPHATE DEHYDRATASE HIS7"/>
    <property type="match status" value="1"/>
</dbReference>
<dbReference type="Pfam" id="PF00475">
    <property type="entry name" value="IGPD"/>
    <property type="match status" value="1"/>
</dbReference>
<dbReference type="SUPFAM" id="SSF54211">
    <property type="entry name" value="Ribosomal protein S5 domain 2-like"/>
    <property type="match status" value="2"/>
</dbReference>
<dbReference type="PROSITE" id="PS00955">
    <property type="entry name" value="IGP_DEHYDRATASE_2"/>
    <property type="match status" value="1"/>
</dbReference>
<gene>
    <name evidence="1" type="primary">hisB</name>
    <name type="ordered locus">Anae109_0754</name>
</gene>
<keyword id="KW-0028">Amino-acid biosynthesis</keyword>
<keyword id="KW-0963">Cytoplasm</keyword>
<keyword id="KW-0368">Histidine biosynthesis</keyword>
<keyword id="KW-0456">Lyase</keyword>
<keyword id="KW-1185">Reference proteome</keyword>
<feature type="chain" id="PRO_0000336292" description="Imidazoleglycerol-phosphate dehydratase">
    <location>
        <begin position="1"/>
        <end position="205"/>
    </location>
</feature>
<feature type="region of interest" description="Disordered" evidence="2">
    <location>
        <begin position="1"/>
        <end position="27"/>
    </location>
</feature>
<sequence>MKQASPRAGGAKARRGQVARKTKETDVSVELRLEPGESSIATGLPFFDHMLDQIARHGGLTLSVQAKGDLQVDAHHTVEDVGIGLGEALRQATADKAGLARYGVAVVPLDEALVEAVVDLSGRPHLTFNAKLPSGKRFIGAYDVDLTQDFLQAFVNHARICLHVNVRYGRNLHHVVEAIFKATARALRAATAREGTALPSTKGLL</sequence>
<comment type="catalytic activity">
    <reaction evidence="1">
        <text>D-erythro-1-(imidazol-4-yl)glycerol 3-phosphate = 3-(imidazol-4-yl)-2-oxopropyl phosphate + H2O</text>
        <dbReference type="Rhea" id="RHEA:11040"/>
        <dbReference type="ChEBI" id="CHEBI:15377"/>
        <dbReference type="ChEBI" id="CHEBI:57766"/>
        <dbReference type="ChEBI" id="CHEBI:58278"/>
        <dbReference type="EC" id="4.2.1.19"/>
    </reaction>
</comment>
<comment type="pathway">
    <text evidence="1">Amino-acid biosynthesis; L-histidine biosynthesis; L-histidine from 5-phospho-alpha-D-ribose 1-diphosphate: step 6/9.</text>
</comment>
<comment type="subcellular location">
    <subcellularLocation>
        <location evidence="1">Cytoplasm</location>
    </subcellularLocation>
</comment>
<comment type="similarity">
    <text evidence="1">Belongs to the imidazoleglycerol-phosphate dehydratase family.</text>
</comment>